<proteinExistence type="inferred from homology"/>
<name>CB2_MALDO</name>
<organism>
    <name type="scientific">Malus domestica</name>
    <name type="common">Apple</name>
    <name type="synonym">Pyrus malus</name>
    <dbReference type="NCBI Taxonomy" id="3750"/>
    <lineage>
        <taxon>Eukaryota</taxon>
        <taxon>Viridiplantae</taxon>
        <taxon>Streptophyta</taxon>
        <taxon>Embryophyta</taxon>
        <taxon>Tracheophyta</taxon>
        <taxon>Spermatophyta</taxon>
        <taxon>Magnoliopsida</taxon>
        <taxon>eudicotyledons</taxon>
        <taxon>Gunneridae</taxon>
        <taxon>Pentapetalae</taxon>
        <taxon>rosids</taxon>
        <taxon>fabids</taxon>
        <taxon>Rosales</taxon>
        <taxon>Rosaceae</taxon>
        <taxon>Amygdaloideae</taxon>
        <taxon>Maleae</taxon>
        <taxon>Malus</taxon>
    </lineage>
</organism>
<reference key="1">
    <citation type="journal article" date="1990" name="Nucleic Acids Res.">
        <title>Nucleotide sequence of an apple nuclear gene encoding a light-harvesting chlorophyll a/b binding polypeptide of photosystem II.</title>
        <authorList>
            <person name="Chen H."/>
            <person name="Korban S.S."/>
            <person name="Buetow D.E."/>
        </authorList>
    </citation>
    <scope>NUCLEOTIDE SEQUENCE [GENOMIC DNA]</scope>
    <source>
        <strain>cv. Golden Delicious</strain>
        <tissue>Leaf</tissue>
    </source>
</reference>
<keyword id="KW-0148">Chlorophyll</keyword>
<keyword id="KW-0150">Chloroplast</keyword>
<keyword id="KW-0157">Chromophore</keyword>
<keyword id="KW-0460">Magnesium</keyword>
<keyword id="KW-0472">Membrane</keyword>
<keyword id="KW-0479">Metal-binding</keyword>
<keyword id="KW-0597">Phosphoprotein</keyword>
<keyword id="KW-0602">Photosynthesis</keyword>
<keyword id="KW-0603">Photosystem I</keyword>
<keyword id="KW-0604">Photosystem II</keyword>
<keyword id="KW-0934">Plastid</keyword>
<keyword id="KW-0793">Thylakoid</keyword>
<keyword id="KW-0809">Transit peptide</keyword>
<keyword id="KW-0812">Transmembrane</keyword>
<keyword id="KW-1133">Transmembrane helix</keyword>
<comment type="function">
    <text>The light-harvesting complex (LHC) functions as a light receptor, it captures and delivers excitation energy to photosystems with which it is closely associated.</text>
</comment>
<comment type="cofactor">
    <text evidence="1">Binds at least 14 chlorophylls (8 Chl-a and 6 Chl-b) and carotenoids such as lutein and neoxanthin.</text>
</comment>
<comment type="subunit">
    <text>The LHC complex consists of chlorophyll a-b binding proteins.</text>
</comment>
<comment type="subcellular location">
    <subcellularLocation>
        <location>Plastid</location>
        <location>Chloroplast thylakoid membrane</location>
        <topology>Multi-pass membrane protein</topology>
    </subcellularLocation>
</comment>
<comment type="domain">
    <text>The N-terminus of the protein extends into the stroma where it is involved with adhesion of granal membranes and post-translational modifications; both are believed to mediate the distribution of excitation energy between photosystems I and II.</text>
</comment>
<comment type="PTM">
    <text evidence="1">Photoregulated by reversible phosphorylation of its threonine residues.</text>
</comment>
<comment type="similarity">
    <text evidence="4">Belongs to the light-harvesting chlorophyll a/b-binding (LHC) protein family.</text>
</comment>
<protein>
    <recommendedName>
        <fullName>Chlorophyll a-b binding protein AB10, chloroplastic</fullName>
    </recommendedName>
    <alternativeName>
        <fullName>LHCII type I CAB-AB10</fullName>
        <shortName>LHCP</shortName>
    </alternativeName>
</protein>
<sequence length="268" mass="29212">MYIPRLSVSICLHPLLIYKIAKPSKLNPISSTLIVTAGFTMLKHAAKSKVSSSTCDRRVKYLGPFSGEWPSYLTGEFPGDYGWDTAGLSAYPETFAKNRELEVIHSRCAMSAALGCIFPELLSVMGQGFGEAVWFKAGAQIFSEGGLDYLGNPSLVHAQSILAIWTTKVILMGAVEGYRIARGPLGEVTDPLYPGSFDSLGLAEDTEAFAELKVKELKNGRLAMFSMFGFFVQAIVSRKDRLENLADHLGWTVNNNALSNVTNFVPGN</sequence>
<feature type="transit peptide" description="Chloroplast" evidence="4">
    <location>
        <begin position="1"/>
        <end position="40"/>
    </location>
</feature>
<feature type="chain" id="PRO_0000003674" description="Chlorophyll a-b binding protein AB10, chloroplastic">
    <location>
        <begin position="41"/>
        <end position="268"/>
    </location>
</feature>
<feature type="transmembrane region" description="Helical" evidence="3">
    <location>
        <begin position="108"/>
        <end position="125"/>
    </location>
</feature>
<feature type="transmembrane region" description="Helical" evidence="3">
    <location>
        <begin position="155"/>
        <end position="175"/>
    </location>
</feature>
<feature type="transmembrane region" description="Helical" evidence="3">
    <location>
        <begin position="222"/>
        <end position="238"/>
    </location>
</feature>
<feature type="binding site" description="axial binding residue" evidence="2">
    <location>
        <position position="61"/>
    </location>
    <ligand>
        <name>chlorophyll b</name>
        <dbReference type="ChEBI" id="CHEBI:61721"/>
        <label>1</label>
    </ligand>
    <ligandPart>
        <name>Mg</name>
        <dbReference type="ChEBI" id="CHEBI:25107"/>
    </ligandPart>
</feature>
<feature type="binding site" evidence="1">
    <location>
        <position position="83"/>
    </location>
    <ligand>
        <name>chlorophyll a</name>
        <dbReference type="ChEBI" id="CHEBI:58416"/>
        <label>1</label>
    </ligand>
</feature>
<feature type="binding site" evidence="1">
    <location>
        <position position="89"/>
    </location>
    <ligand>
        <name>chlorophyll a</name>
        <dbReference type="ChEBI" id="CHEBI:58416"/>
        <label>1</label>
    </ligand>
</feature>
<feature type="binding site" description="axial binding residue" evidence="2">
    <location>
        <position position="102"/>
    </location>
    <ligand>
        <name>chlorophyll a</name>
        <dbReference type="ChEBI" id="CHEBI:58416"/>
        <label>1</label>
    </ligand>
    <ligandPart>
        <name>Mg</name>
        <dbReference type="ChEBI" id="CHEBI:25107"/>
    </ligandPart>
</feature>
<feature type="binding site" description="axial binding residue" evidence="2">
    <location>
        <position position="105"/>
    </location>
    <ligand>
        <name>chlorophyll a</name>
        <dbReference type="ChEBI" id="CHEBI:58416"/>
        <label>2</label>
    </ligand>
    <ligandPart>
        <name>Mg</name>
        <dbReference type="ChEBI" id="CHEBI:25107"/>
    </ligandPart>
</feature>
<feature type="binding site" evidence="1">
    <location>
        <position position="107"/>
    </location>
    <ligand>
        <name>chlorophyll b</name>
        <dbReference type="ChEBI" id="CHEBI:61721"/>
        <label>2</label>
    </ligand>
</feature>
<feature type="binding site" evidence="1">
    <location>
        <position position="140"/>
    </location>
    <ligand>
        <name>chlorophyll a</name>
        <dbReference type="ChEBI" id="CHEBI:58416"/>
        <label>3</label>
    </ligand>
</feature>
<feature type="binding site" evidence="1">
    <location>
        <position position="150"/>
    </location>
    <ligand>
        <name>chlorophyll a</name>
        <dbReference type="ChEBI" id="CHEBI:58416"/>
        <label>3</label>
    </ligand>
</feature>
<feature type="binding site" description="axial binding residue" evidence="2">
    <location>
        <position position="156"/>
    </location>
    <ligand>
        <name>chlorophyll b</name>
        <dbReference type="ChEBI" id="CHEBI:61721"/>
        <label>2</label>
    </ligand>
    <ligandPart>
        <name>Mg</name>
        <dbReference type="ChEBI" id="CHEBI:25107"/>
    </ligandPart>
</feature>
<feature type="binding site" evidence="1">
    <location>
        <position position="160"/>
    </location>
    <ligand>
        <name>chlorophyll b</name>
        <dbReference type="ChEBI" id="CHEBI:61721"/>
        <label>3</label>
    </ligand>
</feature>
<feature type="binding site" description="axial binding residue" evidence="2">
    <location>
        <position position="176"/>
    </location>
    <ligand>
        <name>chlorophyll b</name>
        <dbReference type="ChEBI" id="CHEBI:61721"/>
        <label>3</label>
    </ligand>
    <ligandPart>
        <name>Mg</name>
        <dbReference type="ChEBI" id="CHEBI:25107"/>
    </ligandPart>
</feature>
<feature type="binding site" evidence="1">
    <location>
        <position position="179"/>
    </location>
    <ligand>
        <name>chlorophyll b</name>
        <dbReference type="ChEBI" id="CHEBI:61721"/>
        <label>4</label>
    </ligand>
</feature>
<feature type="binding site" evidence="1">
    <location>
        <position position="185"/>
    </location>
    <ligand>
        <name>chlorophyll b</name>
        <dbReference type="ChEBI" id="CHEBI:61721"/>
        <label>2</label>
    </ligand>
</feature>
<feature type="binding site" evidence="1">
    <location>
        <position position="215"/>
    </location>
    <ligand>
        <name>chlorophyll a</name>
        <dbReference type="ChEBI" id="CHEBI:58416"/>
        <label>5</label>
    </ligand>
</feature>
<feature type="binding site" description="axial binding residue" evidence="2">
    <location>
        <position position="216"/>
    </location>
    <ligand>
        <name>chlorophyll a</name>
        <dbReference type="ChEBI" id="CHEBI:58416"/>
        <label>3</label>
    </ligand>
    <ligandPart>
        <name>Mg</name>
        <dbReference type="ChEBI" id="CHEBI:25107"/>
    </ligandPart>
</feature>
<feature type="binding site" description="axial binding residue" evidence="2">
    <location>
        <position position="219"/>
    </location>
    <ligand>
        <name>chlorophyll a</name>
        <dbReference type="ChEBI" id="CHEBI:58416"/>
        <label>4</label>
    </ligand>
    <ligandPart>
        <name>Mg</name>
        <dbReference type="ChEBI" id="CHEBI:25107"/>
    </ligandPart>
</feature>
<feature type="binding site" evidence="1">
    <location>
        <position position="221"/>
    </location>
    <ligand>
        <name>chlorophyll a</name>
        <dbReference type="ChEBI" id="CHEBI:58416"/>
        <label>1</label>
    </ligand>
</feature>
<feature type="binding site" description="axial binding residue" evidence="2">
    <location>
        <position position="233"/>
    </location>
    <ligand>
        <name>chlorophyll a</name>
        <dbReference type="ChEBI" id="CHEBI:58416"/>
        <label>5</label>
    </ligand>
    <ligandPart>
        <name>Mg</name>
        <dbReference type="ChEBI" id="CHEBI:25107"/>
    </ligandPart>
</feature>
<feature type="binding site" description="axial binding residue" evidence="2">
    <location>
        <position position="248"/>
    </location>
    <ligand>
        <name>chlorophyll a</name>
        <dbReference type="ChEBI" id="CHEBI:58416"/>
        <label>6</label>
    </ligand>
    <ligandPart>
        <name>Mg</name>
        <dbReference type="ChEBI" id="CHEBI:25107"/>
    </ligandPart>
</feature>
<feature type="binding site" evidence="1">
    <location>
        <position position="257"/>
    </location>
    <ligand>
        <name>chlorophyll a</name>
        <dbReference type="ChEBI" id="CHEBI:58416"/>
        <label>6</label>
    </ligand>
</feature>
<feature type="binding site" evidence="1">
    <location>
        <position position="264"/>
    </location>
    <ligand>
        <name>chlorophyll b</name>
        <dbReference type="ChEBI" id="CHEBI:61721"/>
        <label>5</label>
    </ligand>
</feature>
<accession>P15773</accession>
<dbReference type="EMBL" id="X17697">
    <property type="protein sequence ID" value="CAA35690.1"/>
    <property type="molecule type" value="Genomic_DNA"/>
</dbReference>
<dbReference type="PIR" id="S08229">
    <property type="entry name" value="S08229"/>
</dbReference>
<dbReference type="SMR" id="P15773"/>
<dbReference type="GO" id="GO:0009535">
    <property type="term" value="C:chloroplast thylakoid membrane"/>
    <property type="evidence" value="ECO:0007669"/>
    <property type="project" value="UniProtKB-SubCell"/>
</dbReference>
<dbReference type="GO" id="GO:0009522">
    <property type="term" value="C:photosystem I"/>
    <property type="evidence" value="ECO:0007669"/>
    <property type="project" value="UniProtKB-KW"/>
</dbReference>
<dbReference type="GO" id="GO:0009523">
    <property type="term" value="C:photosystem II"/>
    <property type="evidence" value="ECO:0007669"/>
    <property type="project" value="UniProtKB-KW"/>
</dbReference>
<dbReference type="GO" id="GO:0016168">
    <property type="term" value="F:chlorophyll binding"/>
    <property type="evidence" value="ECO:0007669"/>
    <property type="project" value="UniProtKB-KW"/>
</dbReference>
<dbReference type="GO" id="GO:0046872">
    <property type="term" value="F:metal ion binding"/>
    <property type="evidence" value="ECO:0007669"/>
    <property type="project" value="UniProtKB-KW"/>
</dbReference>
<dbReference type="GO" id="GO:0009765">
    <property type="term" value="P:photosynthesis, light harvesting"/>
    <property type="evidence" value="ECO:0007669"/>
    <property type="project" value="InterPro"/>
</dbReference>
<dbReference type="FunFam" id="1.10.3460.10:FF:000021">
    <property type="entry name" value="Chlorophyll a-b binding protein, chloroplastic"/>
    <property type="match status" value="1"/>
</dbReference>
<dbReference type="Gene3D" id="1.10.3460.10">
    <property type="entry name" value="Chlorophyll a/b binding protein domain"/>
    <property type="match status" value="1"/>
</dbReference>
<dbReference type="InterPro" id="IPR001344">
    <property type="entry name" value="Chloro_AB-bd_pln"/>
</dbReference>
<dbReference type="InterPro" id="IPR022796">
    <property type="entry name" value="Chloroa_b-bind"/>
</dbReference>
<dbReference type="PANTHER" id="PTHR21649">
    <property type="entry name" value="CHLOROPHYLL A/B BINDING PROTEIN"/>
    <property type="match status" value="1"/>
</dbReference>
<dbReference type="Pfam" id="PF00504">
    <property type="entry name" value="Chloroa_b-bind"/>
    <property type="match status" value="1"/>
</dbReference>
<dbReference type="SUPFAM" id="SSF103511">
    <property type="entry name" value="Chlorophyll a-b binding protein"/>
    <property type="match status" value="1"/>
</dbReference>
<evidence type="ECO:0000250" key="1"/>
<evidence type="ECO:0000250" key="2">
    <source>
        <dbReference type="UniProtKB" id="P12333"/>
    </source>
</evidence>
<evidence type="ECO:0000255" key="3"/>
<evidence type="ECO:0000305" key="4"/>